<comment type="function">
    <text evidence="2">Blocks M2 muscarinic acetylcholine receptors (CHRM2). Fully blocks the binding of N-methylscopolamine (NMS) and oxotremorine-M to M2 receptors, slightly increased NMS binding to M1 receptors.</text>
</comment>
<comment type="subunit">
    <text evidence="3">Monomer.</text>
</comment>
<comment type="subcellular location">
    <subcellularLocation>
        <location evidence="2">Secreted</location>
    </subcellularLocation>
</comment>
<comment type="tissue specificity">
    <text evidence="4">Expressed by the venom gland.</text>
</comment>
<comment type="miscellaneous">
    <text evidence="2">Negative results: has no effect on M3, M4 and M5 muscarinic acetylcholine receptors.</text>
</comment>
<comment type="similarity">
    <text evidence="4">Belongs to the three-finger toxin family. Short-chain subfamily. Type B muscarinic toxin sub-subfamily.</text>
</comment>
<evidence type="ECO:0000250" key="1">
    <source>
        <dbReference type="UniProtKB" id="P0C1Z0"/>
    </source>
</evidence>
<evidence type="ECO:0000269" key="2">
    <source>
    </source>
</evidence>
<evidence type="ECO:0000303" key="3">
    <source>
    </source>
</evidence>
<evidence type="ECO:0000305" key="4"/>
<evidence type="ECO:0000305" key="5">
    <source>
    </source>
</evidence>
<accession>P60237</accession>
<sequence length="63" mass="7100">RICHSQMSSQPPTTTFCRVNSCYRRTLRDPHDPRGTIIVRGCGCPRMKPGTKLECCTSDKCNV</sequence>
<name>3SUB_DENAN</name>
<dbReference type="SMR" id="P60237"/>
<dbReference type="GO" id="GO:0005576">
    <property type="term" value="C:extracellular region"/>
    <property type="evidence" value="ECO:0007669"/>
    <property type="project" value="UniProtKB-SubCell"/>
</dbReference>
<dbReference type="GO" id="GO:0090729">
    <property type="term" value="F:toxin activity"/>
    <property type="evidence" value="ECO:0007669"/>
    <property type="project" value="UniProtKB-KW"/>
</dbReference>
<dbReference type="CDD" id="cd00206">
    <property type="entry name" value="TFP_snake_toxin"/>
    <property type="match status" value="1"/>
</dbReference>
<dbReference type="Gene3D" id="2.10.60.10">
    <property type="entry name" value="CD59"/>
    <property type="match status" value="1"/>
</dbReference>
<dbReference type="InterPro" id="IPR003571">
    <property type="entry name" value="Snake_3FTx"/>
</dbReference>
<dbReference type="InterPro" id="IPR045860">
    <property type="entry name" value="Snake_toxin-like_sf"/>
</dbReference>
<dbReference type="InterPro" id="IPR018354">
    <property type="entry name" value="Snake_toxin_con_site"/>
</dbReference>
<dbReference type="InterPro" id="IPR054131">
    <property type="entry name" value="Toxin_cobra-type"/>
</dbReference>
<dbReference type="Pfam" id="PF21947">
    <property type="entry name" value="Toxin_cobra-type"/>
    <property type="match status" value="1"/>
</dbReference>
<dbReference type="SUPFAM" id="SSF57302">
    <property type="entry name" value="Snake toxin-like"/>
    <property type="match status" value="1"/>
</dbReference>
<dbReference type="PROSITE" id="PS00272">
    <property type="entry name" value="SNAKE_TOXIN"/>
    <property type="match status" value="1"/>
</dbReference>
<protein>
    <recommendedName>
        <fullName evidence="3">Muscarinic toxin 2</fullName>
        <shortName evidence="3">m2-toxin</shortName>
    </recommendedName>
</protein>
<feature type="chain" id="PRO_0000093647" description="Muscarinic toxin 2" evidence="5">
    <location>
        <begin position="1"/>
        <end position="63"/>
    </location>
</feature>
<feature type="disulfide bond" evidence="1">
    <location>
        <begin position="3"/>
        <end position="22"/>
    </location>
</feature>
<feature type="disulfide bond" evidence="1">
    <location>
        <begin position="17"/>
        <end position="42"/>
    </location>
</feature>
<feature type="disulfide bond" evidence="1">
    <location>
        <begin position="44"/>
        <end position="55"/>
    </location>
</feature>
<feature type="disulfide bond" evidence="1">
    <location>
        <begin position="56"/>
        <end position="61"/>
    </location>
</feature>
<reference key="1">
    <citation type="journal article" date="1999" name="Mol. Pharmacol.">
        <title>m2-toxin: a selective ligand for M2 muscarinic receptors.</title>
        <authorList>
            <person name="Carsi J.M."/>
            <person name="Valentine H.H."/>
            <person name="Potter L.T."/>
        </authorList>
    </citation>
    <scope>NUCLEOTIDE SEQUENCE [MRNA]</scope>
    <scope>PROTEIN SEQUENCE OF 1-53</scope>
    <scope>FUNCTION</scope>
    <scope>SUBCELLULAR LOCATION</scope>
    <source>
        <tissue>Venom</tissue>
        <tissue>Venom gland</tissue>
    </source>
</reference>
<keyword id="KW-0903">Direct protein sequencing</keyword>
<keyword id="KW-1015">Disulfide bond</keyword>
<keyword id="KW-1214">G-protein coupled acetylcholine receptor impairing toxin</keyword>
<keyword id="KW-1213">G-protein coupled receptor impairing toxin</keyword>
<keyword id="KW-0528">Neurotoxin</keyword>
<keyword id="KW-0629">Postsynaptic neurotoxin</keyword>
<keyword id="KW-0964">Secreted</keyword>
<keyword id="KW-0800">Toxin</keyword>
<organism>
    <name type="scientific">Dendroaspis angusticeps</name>
    <name type="common">Eastern green mamba</name>
    <name type="synonym">Naja angusticeps</name>
    <dbReference type="NCBI Taxonomy" id="8618"/>
    <lineage>
        <taxon>Eukaryota</taxon>
        <taxon>Metazoa</taxon>
        <taxon>Chordata</taxon>
        <taxon>Craniata</taxon>
        <taxon>Vertebrata</taxon>
        <taxon>Euteleostomi</taxon>
        <taxon>Lepidosauria</taxon>
        <taxon>Squamata</taxon>
        <taxon>Bifurcata</taxon>
        <taxon>Unidentata</taxon>
        <taxon>Episquamata</taxon>
        <taxon>Toxicofera</taxon>
        <taxon>Serpentes</taxon>
        <taxon>Colubroidea</taxon>
        <taxon>Elapidae</taxon>
        <taxon>Elapinae</taxon>
        <taxon>Dendroaspis</taxon>
    </lineage>
</organism>
<proteinExistence type="evidence at protein level"/>